<proteinExistence type="inferred from homology"/>
<name>PYRF_LYSSC</name>
<keyword id="KW-0210">Decarboxylase</keyword>
<keyword id="KW-0456">Lyase</keyword>
<keyword id="KW-0665">Pyrimidine biosynthesis</keyword>
<reference key="1">
    <citation type="journal article" date="2008" name="J. Bacteriol.">
        <title>Complete genome sequence of the mosquitocidal bacterium Bacillus sphaericus C3-41 and comparison with those of closely related Bacillus species.</title>
        <authorList>
            <person name="Hu X."/>
            <person name="Fan W."/>
            <person name="Han B."/>
            <person name="Liu H."/>
            <person name="Zheng D."/>
            <person name="Li Q."/>
            <person name="Dong W."/>
            <person name="Yan J."/>
            <person name="Gao M."/>
            <person name="Berry C."/>
            <person name="Yuan Z."/>
        </authorList>
    </citation>
    <scope>NUCLEOTIDE SEQUENCE [LARGE SCALE GENOMIC DNA]</scope>
    <source>
        <strain>C3-41</strain>
    </source>
</reference>
<gene>
    <name evidence="1" type="primary">pyrF</name>
    <name type="ordered locus">Bsph_1468</name>
</gene>
<evidence type="ECO:0000255" key="1">
    <source>
        <dbReference type="HAMAP-Rule" id="MF_01200"/>
    </source>
</evidence>
<accession>B1HQC3</accession>
<organism>
    <name type="scientific">Lysinibacillus sphaericus (strain C3-41)</name>
    <dbReference type="NCBI Taxonomy" id="444177"/>
    <lineage>
        <taxon>Bacteria</taxon>
        <taxon>Bacillati</taxon>
        <taxon>Bacillota</taxon>
        <taxon>Bacilli</taxon>
        <taxon>Bacillales</taxon>
        <taxon>Bacillaceae</taxon>
        <taxon>Lysinibacillus</taxon>
    </lineage>
</organism>
<sequence length="234" mass="25341">MNTKPILALDFPGEKEVFDFLKHFHEPLFVKIGMELYMQEGPDIVRKVKELGHDVFLDLKLHDIPNTVFSAMKGLAKLGVNLVNVHAAGGRPMMEAALEGLEAGTPVGKERPALIAVTQLTSTTEEQMQTEQRIALSLQESVLHYARLTKQAALQGVVCSVHEAKAIAEVCGEDFLRVTPGIRLAGGAAHDQKRIATPDGAKREGSSLIVVGRAVTGAQDPVAAYKIVSELWEA</sequence>
<feature type="chain" id="PRO_1000138537" description="Orotidine 5'-phosphate decarboxylase">
    <location>
        <begin position="1"/>
        <end position="234"/>
    </location>
</feature>
<feature type="active site" description="Proton donor" evidence="1">
    <location>
        <position position="60"/>
    </location>
</feature>
<feature type="binding site" evidence="1">
    <location>
        <position position="10"/>
    </location>
    <ligand>
        <name>substrate</name>
    </ligand>
</feature>
<feature type="binding site" evidence="1">
    <location>
        <position position="31"/>
    </location>
    <ligand>
        <name>substrate</name>
    </ligand>
</feature>
<feature type="binding site" evidence="1">
    <location>
        <begin position="58"/>
        <end position="67"/>
    </location>
    <ligand>
        <name>substrate</name>
    </ligand>
</feature>
<feature type="binding site" evidence="1">
    <location>
        <position position="121"/>
    </location>
    <ligand>
        <name>substrate</name>
    </ligand>
</feature>
<feature type="binding site" evidence="1">
    <location>
        <position position="183"/>
    </location>
    <ligand>
        <name>substrate</name>
    </ligand>
</feature>
<feature type="binding site" evidence="1">
    <location>
        <position position="192"/>
    </location>
    <ligand>
        <name>substrate</name>
    </ligand>
</feature>
<feature type="binding site" evidence="1">
    <location>
        <position position="212"/>
    </location>
    <ligand>
        <name>substrate</name>
    </ligand>
</feature>
<feature type="binding site" evidence="1">
    <location>
        <position position="213"/>
    </location>
    <ligand>
        <name>substrate</name>
    </ligand>
</feature>
<comment type="function">
    <text evidence="1">Catalyzes the decarboxylation of orotidine 5'-monophosphate (OMP) to uridine 5'-monophosphate (UMP).</text>
</comment>
<comment type="catalytic activity">
    <reaction evidence="1">
        <text>orotidine 5'-phosphate + H(+) = UMP + CO2</text>
        <dbReference type="Rhea" id="RHEA:11596"/>
        <dbReference type="ChEBI" id="CHEBI:15378"/>
        <dbReference type="ChEBI" id="CHEBI:16526"/>
        <dbReference type="ChEBI" id="CHEBI:57538"/>
        <dbReference type="ChEBI" id="CHEBI:57865"/>
        <dbReference type="EC" id="4.1.1.23"/>
    </reaction>
</comment>
<comment type="pathway">
    <text evidence="1">Pyrimidine metabolism; UMP biosynthesis via de novo pathway; UMP from orotate: step 2/2.</text>
</comment>
<comment type="subunit">
    <text evidence="1">Homodimer.</text>
</comment>
<comment type="similarity">
    <text evidence="1">Belongs to the OMP decarboxylase family. Type 1 subfamily.</text>
</comment>
<protein>
    <recommendedName>
        <fullName evidence="1">Orotidine 5'-phosphate decarboxylase</fullName>
        <ecNumber evidence="1">4.1.1.23</ecNumber>
    </recommendedName>
    <alternativeName>
        <fullName evidence="1">OMP decarboxylase</fullName>
        <shortName evidence="1">OMPDCase</shortName>
        <shortName evidence="1">OMPdecase</shortName>
    </alternativeName>
</protein>
<dbReference type="EC" id="4.1.1.23" evidence="1"/>
<dbReference type="EMBL" id="CP000817">
    <property type="protein sequence ID" value="ACA39070.1"/>
    <property type="molecule type" value="Genomic_DNA"/>
</dbReference>
<dbReference type="RefSeq" id="WP_012293189.1">
    <property type="nucleotide sequence ID" value="NC_010382.1"/>
</dbReference>
<dbReference type="SMR" id="B1HQC3"/>
<dbReference type="EnsemblBacteria" id="ACA39070">
    <property type="protein sequence ID" value="ACA39070"/>
    <property type="gene ID" value="Bsph_1468"/>
</dbReference>
<dbReference type="KEGG" id="lsp:Bsph_1468"/>
<dbReference type="HOGENOM" id="CLU_067069_1_1_9"/>
<dbReference type="UniPathway" id="UPA00070">
    <property type="reaction ID" value="UER00120"/>
</dbReference>
<dbReference type="Proteomes" id="UP000002164">
    <property type="component" value="Chromosome"/>
</dbReference>
<dbReference type="GO" id="GO:0005829">
    <property type="term" value="C:cytosol"/>
    <property type="evidence" value="ECO:0007669"/>
    <property type="project" value="TreeGrafter"/>
</dbReference>
<dbReference type="GO" id="GO:0004590">
    <property type="term" value="F:orotidine-5'-phosphate decarboxylase activity"/>
    <property type="evidence" value="ECO:0007669"/>
    <property type="project" value="UniProtKB-UniRule"/>
</dbReference>
<dbReference type="GO" id="GO:0006207">
    <property type="term" value="P:'de novo' pyrimidine nucleobase biosynthetic process"/>
    <property type="evidence" value="ECO:0007669"/>
    <property type="project" value="InterPro"/>
</dbReference>
<dbReference type="GO" id="GO:0044205">
    <property type="term" value="P:'de novo' UMP biosynthetic process"/>
    <property type="evidence" value="ECO:0007669"/>
    <property type="project" value="UniProtKB-UniRule"/>
</dbReference>
<dbReference type="CDD" id="cd04725">
    <property type="entry name" value="OMP_decarboxylase_like"/>
    <property type="match status" value="1"/>
</dbReference>
<dbReference type="FunFam" id="3.20.20.70:FF:000015">
    <property type="entry name" value="Orotidine 5'-phosphate decarboxylase"/>
    <property type="match status" value="1"/>
</dbReference>
<dbReference type="Gene3D" id="3.20.20.70">
    <property type="entry name" value="Aldolase class I"/>
    <property type="match status" value="1"/>
</dbReference>
<dbReference type="HAMAP" id="MF_01200_B">
    <property type="entry name" value="OMPdecase_type1_B"/>
    <property type="match status" value="1"/>
</dbReference>
<dbReference type="InterPro" id="IPR013785">
    <property type="entry name" value="Aldolase_TIM"/>
</dbReference>
<dbReference type="InterPro" id="IPR014732">
    <property type="entry name" value="OMPdecase"/>
</dbReference>
<dbReference type="InterPro" id="IPR018089">
    <property type="entry name" value="OMPdecase_AS"/>
</dbReference>
<dbReference type="InterPro" id="IPR047596">
    <property type="entry name" value="OMPdecase_bac"/>
</dbReference>
<dbReference type="InterPro" id="IPR001754">
    <property type="entry name" value="OMPdeCOase_dom"/>
</dbReference>
<dbReference type="InterPro" id="IPR011060">
    <property type="entry name" value="RibuloseP-bd_barrel"/>
</dbReference>
<dbReference type="NCBIfam" id="NF001273">
    <property type="entry name" value="PRK00230.1"/>
    <property type="match status" value="1"/>
</dbReference>
<dbReference type="NCBIfam" id="TIGR01740">
    <property type="entry name" value="pyrF"/>
    <property type="match status" value="1"/>
</dbReference>
<dbReference type="PANTHER" id="PTHR32119">
    <property type="entry name" value="OROTIDINE 5'-PHOSPHATE DECARBOXYLASE"/>
    <property type="match status" value="1"/>
</dbReference>
<dbReference type="PANTHER" id="PTHR32119:SF2">
    <property type="entry name" value="OROTIDINE 5'-PHOSPHATE DECARBOXYLASE"/>
    <property type="match status" value="1"/>
</dbReference>
<dbReference type="Pfam" id="PF00215">
    <property type="entry name" value="OMPdecase"/>
    <property type="match status" value="1"/>
</dbReference>
<dbReference type="SMART" id="SM00934">
    <property type="entry name" value="OMPdecase"/>
    <property type="match status" value="1"/>
</dbReference>
<dbReference type="SUPFAM" id="SSF51366">
    <property type="entry name" value="Ribulose-phoshate binding barrel"/>
    <property type="match status" value="1"/>
</dbReference>
<dbReference type="PROSITE" id="PS00156">
    <property type="entry name" value="OMPDECASE"/>
    <property type="match status" value="1"/>
</dbReference>